<accession>Q22744</accession>
<accession>Q58AA9</accession>
<evidence type="ECO:0000250" key="1">
    <source>
        <dbReference type="UniProtKB" id="Q9NS23"/>
    </source>
</evidence>
<evidence type="ECO:0000255" key="2">
    <source>
        <dbReference type="PROSITE-ProRule" id="PRU00166"/>
    </source>
</evidence>
<evidence type="ECO:0000255" key="3">
    <source>
        <dbReference type="PROSITE-ProRule" id="PRU00226"/>
    </source>
</evidence>
<evidence type="ECO:0000255" key="4">
    <source>
        <dbReference type="PROSITE-ProRule" id="PRU00310"/>
    </source>
</evidence>
<evidence type="ECO:0000256" key="5">
    <source>
        <dbReference type="SAM" id="MobiDB-lite"/>
    </source>
</evidence>
<evidence type="ECO:0000269" key="6">
    <source>
    </source>
</evidence>
<evidence type="ECO:0000269" key="7">
    <source>
    </source>
</evidence>
<evidence type="ECO:0000303" key="8">
    <source>
    </source>
</evidence>
<evidence type="ECO:0000303" key="9">
    <source>
    </source>
</evidence>
<evidence type="ECO:0000305" key="10"/>
<evidence type="ECO:0000305" key="11">
    <source>
    </source>
</evidence>
<evidence type="ECO:0000312" key="12">
    <source>
        <dbReference type="Proteomes" id="UP000001940"/>
    </source>
</evidence>
<evidence type="ECO:0000312" key="13">
    <source>
        <dbReference type="WormBase" id="T24F1.3a"/>
    </source>
</evidence>
<evidence type="ECO:0000312" key="14">
    <source>
        <dbReference type="WormBase" id="T24F1.3b"/>
    </source>
</evidence>
<keyword id="KW-0025">Alternative splicing</keyword>
<keyword id="KW-0963">Cytoplasm</keyword>
<keyword id="KW-0206">Cytoskeleton</keyword>
<keyword id="KW-0479">Metal-binding</keyword>
<keyword id="KW-0493">Microtubule</keyword>
<keyword id="KW-1185">Reference proteome</keyword>
<keyword id="KW-0862">Zinc</keyword>
<keyword id="KW-0863">Zinc-finger</keyword>
<dbReference type="EMBL" id="BX284602">
    <property type="protein sequence ID" value="CAA90137.1"/>
    <property type="molecule type" value="Genomic_DNA"/>
</dbReference>
<dbReference type="EMBL" id="BX284602">
    <property type="protein sequence ID" value="CAI70412.1"/>
    <property type="molecule type" value="Genomic_DNA"/>
</dbReference>
<dbReference type="PIR" id="T25245">
    <property type="entry name" value="T25245"/>
</dbReference>
<dbReference type="RefSeq" id="NP_001022361.1">
    <molecule id="Q22744-1"/>
    <property type="nucleotide sequence ID" value="NM_001027190.5"/>
</dbReference>
<dbReference type="RefSeq" id="NP_001022362.1">
    <property type="nucleotide sequence ID" value="NM_001027191.3"/>
</dbReference>
<dbReference type="RefSeq" id="NP_001370200.1">
    <molecule id="Q22744-2"/>
    <property type="nucleotide sequence ID" value="NM_001383950.2"/>
</dbReference>
<dbReference type="SMR" id="Q22744"/>
<dbReference type="FunCoup" id="Q22744">
    <property type="interactions" value="576"/>
</dbReference>
<dbReference type="STRING" id="6239.T24F1.3a.1"/>
<dbReference type="PaxDb" id="6239-T24F1.3a"/>
<dbReference type="PeptideAtlas" id="Q22744"/>
<dbReference type="EnsemblMetazoa" id="T24F1.3a.1">
    <molecule id="Q22744-1"/>
    <property type="protein sequence ID" value="T24F1.3a.1"/>
    <property type="gene ID" value="WBGene00011995"/>
</dbReference>
<dbReference type="EnsemblMetazoa" id="T24F1.3b.1">
    <molecule id="Q22744-2"/>
    <property type="protein sequence ID" value="T24F1.3b.1"/>
    <property type="gene ID" value="WBGene00011995"/>
</dbReference>
<dbReference type="EnsemblMetazoa" id="T24F1.3b.2">
    <molecule id="Q22744-2"/>
    <property type="protein sequence ID" value="T24F1.3b.2"/>
    <property type="gene ID" value="WBGene00011995"/>
</dbReference>
<dbReference type="GeneID" id="174728"/>
<dbReference type="KEGG" id="cel:CELE_T24F1.3"/>
<dbReference type="UCSC" id="T24F1.3a">
    <property type="organism name" value="c. elegans"/>
</dbReference>
<dbReference type="AGR" id="WB:WBGene00011995"/>
<dbReference type="CTD" id="174728"/>
<dbReference type="WormBase" id="T24F1.3a">
    <molecule id="Q22744-1"/>
    <property type="protein sequence ID" value="CE02363"/>
    <property type="gene ID" value="WBGene00011995"/>
    <property type="gene designation" value="rsf-1"/>
</dbReference>
<dbReference type="WormBase" id="T24F1.3b">
    <molecule id="Q22744-2"/>
    <property type="protein sequence ID" value="CE38227"/>
    <property type="gene ID" value="WBGene00011995"/>
    <property type="gene designation" value="rsf-1"/>
</dbReference>
<dbReference type="eggNOG" id="KOG4239">
    <property type="taxonomic scope" value="Eukaryota"/>
</dbReference>
<dbReference type="GeneTree" id="ENSGT00940000169509"/>
<dbReference type="HOGENOM" id="CLU_036241_0_0_1"/>
<dbReference type="InParanoid" id="Q22744"/>
<dbReference type="OMA" id="ALYECEQ"/>
<dbReference type="OrthoDB" id="74314at2759"/>
<dbReference type="PhylomeDB" id="Q22744"/>
<dbReference type="PRO" id="PR:Q22744"/>
<dbReference type="Proteomes" id="UP000001940">
    <property type="component" value="Chromosome II"/>
</dbReference>
<dbReference type="Bgee" id="WBGene00011995">
    <property type="expression patterns" value="Expressed in pharyngeal muscle cell (C elegans) and 3 other cell types or tissues"/>
</dbReference>
<dbReference type="ExpressionAtlas" id="Q22744">
    <property type="expression patterns" value="baseline and differential"/>
</dbReference>
<dbReference type="GO" id="GO:0005737">
    <property type="term" value="C:cytoplasm"/>
    <property type="evidence" value="ECO:0007669"/>
    <property type="project" value="UniProtKB-KW"/>
</dbReference>
<dbReference type="GO" id="GO:0005874">
    <property type="term" value="C:microtubule"/>
    <property type="evidence" value="ECO:0007669"/>
    <property type="project" value="UniProtKB-KW"/>
</dbReference>
<dbReference type="GO" id="GO:0031267">
    <property type="term" value="F:small GTPase binding"/>
    <property type="evidence" value="ECO:0000314"/>
    <property type="project" value="UniProtKB"/>
</dbReference>
<dbReference type="GO" id="GO:0008270">
    <property type="term" value="F:zinc ion binding"/>
    <property type="evidence" value="ECO:0007669"/>
    <property type="project" value="UniProtKB-KW"/>
</dbReference>
<dbReference type="GO" id="GO:0007015">
    <property type="term" value="P:actin filament organization"/>
    <property type="evidence" value="ECO:0000315"/>
    <property type="project" value="UniProtKB"/>
</dbReference>
<dbReference type="GO" id="GO:0030261">
    <property type="term" value="P:chromosome condensation"/>
    <property type="evidence" value="ECO:0000315"/>
    <property type="project" value="UniProtKB"/>
</dbReference>
<dbReference type="GO" id="GO:0016331">
    <property type="term" value="P:morphogenesis of embryonic epithelium"/>
    <property type="evidence" value="ECO:0000315"/>
    <property type="project" value="UniProtKB"/>
</dbReference>
<dbReference type="GO" id="GO:0042327">
    <property type="term" value="P:positive regulation of phosphorylation"/>
    <property type="evidence" value="ECO:0000314"/>
    <property type="project" value="UniProtKB"/>
</dbReference>
<dbReference type="GO" id="GO:1902884">
    <property type="term" value="P:positive regulation of response to oxidative stress"/>
    <property type="evidence" value="ECO:0000315"/>
    <property type="project" value="UniProtKB"/>
</dbReference>
<dbReference type="GO" id="GO:0040028">
    <property type="term" value="P:regulation of vulval development"/>
    <property type="evidence" value="ECO:0000316"/>
    <property type="project" value="UniProtKB"/>
</dbReference>
<dbReference type="GO" id="GO:0007165">
    <property type="term" value="P:signal transduction"/>
    <property type="evidence" value="ECO:0000318"/>
    <property type="project" value="GO_Central"/>
</dbReference>
<dbReference type="CDD" id="cd20885">
    <property type="entry name" value="C1_RASSF1"/>
    <property type="match status" value="1"/>
</dbReference>
<dbReference type="CDD" id="cd01778">
    <property type="entry name" value="RA_RASSF1_like"/>
    <property type="match status" value="1"/>
</dbReference>
<dbReference type="CDD" id="cd21885">
    <property type="entry name" value="SARAH_RASSF1-like"/>
    <property type="match status" value="1"/>
</dbReference>
<dbReference type="Gene3D" id="1.20.5.110">
    <property type="match status" value="1"/>
</dbReference>
<dbReference type="Gene3D" id="3.30.60.20">
    <property type="match status" value="1"/>
</dbReference>
<dbReference type="Gene3D" id="3.10.20.90">
    <property type="entry name" value="Phosphatidylinositol 3-kinase Catalytic Subunit, Chain A, domain 1"/>
    <property type="match status" value="1"/>
</dbReference>
<dbReference type="InterPro" id="IPR046349">
    <property type="entry name" value="C1-like_sf"/>
</dbReference>
<dbReference type="InterPro" id="IPR020454">
    <property type="entry name" value="DAG/PE-bd"/>
</dbReference>
<dbReference type="InterPro" id="IPR002219">
    <property type="entry name" value="PE/DAG-bd"/>
</dbReference>
<dbReference type="InterPro" id="IPR000159">
    <property type="entry name" value="RA_dom"/>
</dbReference>
<dbReference type="InterPro" id="IPR033614">
    <property type="entry name" value="RASSF1-6"/>
</dbReference>
<dbReference type="InterPro" id="IPR011524">
    <property type="entry name" value="SARAH_dom"/>
</dbReference>
<dbReference type="InterPro" id="IPR029071">
    <property type="entry name" value="Ubiquitin-like_domsf"/>
</dbReference>
<dbReference type="PANTHER" id="PTHR22738:SF10">
    <property type="entry name" value="RAS ASSOCIATION DOMAIN-CONTAINING PROTEIN 1 HOMOLOG"/>
    <property type="match status" value="1"/>
</dbReference>
<dbReference type="PANTHER" id="PTHR22738">
    <property type="entry name" value="RASSF"/>
    <property type="match status" value="1"/>
</dbReference>
<dbReference type="Pfam" id="PF00130">
    <property type="entry name" value="C1_1"/>
    <property type="match status" value="1"/>
</dbReference>
<dbReference type="Pfam" id="PF16517">
    <property type="entry name" value="Nore1-SARAH"/>
    <property type="match status" value="1"/>
</dbReference>
<dbReference type="Pfam" id="PF00788">
    <property type="entry name" value="RA"/>
    <property type="match status" value="1"/>
</dbReference>
<dbReference type="PRINTS" id="PR00008">
    <property type="entry name" value="DAGPEDOMAIN"/>
</dbReference>
<dbReference type="SMART" id="SM00109">
    <property type="entry name" value="C1"/>
    <property type="match status" value="1"/>
</dbReference>
<dbReference type="SMART" id="SM00314">
    <property type="entry name" value="RA"/>
    <property type="match status" value="1"/>
</dbReference>
<dbReference type="SUPFAM" id="SSF57889">
    <property type="entry name" value="Cysteine-rich domain"/>
    <property type="match status" value="1"/>
</dbReference>
<dbReference type="SUPFAM" id="SSF54236">
    <property type="entry name" value="Ubiquitin-like"/>
    <property type="match status" value="1"/>
</dbReference>
<dbReference type="PROSITE" id="PS50200">
    <property type="entry name" value="RA"/>
    <property type="match status" value="1"/>
</dbReference>
<dbReference type="PROSITE" id="PS50951">
    <property type="entry name" value="SARAH"/>
    <property type="match status" value="1"/>
</dbReference>
<dbReference type="PROSITE" id="PS00479">
    <property type="entry name" value="ZF_DAG_PE_1"/>
    <property type="match status" value="1"/>
</dbReference>
<dbReference type="PROSITE" id="PS50081">
    <property type="entry name" value="ZF_DAG_PE_2"/>
    <property type="match status" value="1"/>
</dbReference>
<organism evidence="12">
    <name type="scientific">Caenorhabditis elegans</name>
    <dbReference type="NCBI Taxonomy" id="6239"/>
    <lineage>
        <taxon>Eukaryota</taxon>
        <taxon>Metazoa</taxon>
        <taxon>Ecdysozoa</taxon>
        <taxon>Nematoda</taxon>
        <taxon>Chromadorea</taxon>
        <taxon>Rhabditida</taxon>
        <taxon>Rhabditina</taxon>
        <taxon>Rhabditomorpha</taxon>
        <taxon>Rhabditoidea</taxon>
        <taxon>Rhabditidae</taxon>
        <taxon>Peloderinae</taxon>
        <taxon>Caenorhabditis</taxon>
    </lineage>
</organism>
<comment type="function">
    <text evidence="6 7">Involved in embryonic morphogenesis (PubMed:23103556). Plays a role in the organization of apical filamentous actin in epithelial cells of the developing embryo (PubMed:23103556). May play a role in let-60-mediated vulval development (PubMed:23103556). May induce nuclear condensation (PubMed:23103556). Positively regulates the oxidative stress response, and this may be in association with the small GTPase rab-39 (PubMed:23294242). Not required for muscle integrity (PubMed:23103556).</text>
</comment>
<comment type="subunit">
    <text evidence="6 7">Interacts with rab-39 (GTP-bound form) (PubMed:23294242). Interacts (via SARAH domain) with cst-1; the interaction is required for the phosphorylation of cst-1 (PubMed:23103556).</text>
</comment>
<comment type="subcellular location">
    <subcellularLocation>
        <location evidence="1">Cytoplasm</location>
        <location evidence="1">Cytoskeleton</location>
    </subcellularLocation>
</comment>
<comment type="alternative products">
    <event type="alternative splicing"/>
    <isoform>
        <id>Q22744-1</id>
        <name evidence="13">a</name>
        <name evidence="9">rasf-1a</name>
        <sequence type="displayed"/>
    </isoform>
    <isoform>
        <id>Q22744-2</id>
        <name evidence="14">b</name>
        <name evidence="9">rasf-1b</name>
        <sequence type="described" ref="VSP_061059"/>
    </isoform>
</comment>
<comment type="tissue specificity">
    <text evidence="6">Expressed in the pharynx, epithelial cells, ciliated neurons in the head, body wall muscles, hypodermis, vulva, gonadal sheath cells, tail hypodermis and in coelomocytes.</text>
</comment>
<comment type="tissue specificity">
    <molecule>Isoform a</molecule>
    <text evidence="7">Expressed in the pharynx, neurons and vulva.</text>
</comment>
<comment type="developmental stage">
    <text evidence="6">In embryos, expressed in epidermal cells during the dorsal intercalation and ventral enclosure.</text>
</comment>
<comment type="disruption phenotype">
    <text evidence="7">RNAi-mediated knockdown results in reduced survival in response to oxidative stress induced by sodium arsenite.</text>
</comment>
<feature type="chain" id="PRO_0000452815" description="Ras association domain-containing protein 1 homolog">
    <location>
        <begin position="1"/>
        <end position="615"/>
    </location>
</feature>
<feature type="domain" description="Ras-associating" evidence="2">
    <location>
        <begin position="396"/>
        <end position="496"/>
    </location>
</feature>
<feature type="domain" description="SARAH" evidence="4">
    <location>
        <begin position="498"/>
        <end position="545"/>
    </location>
</feature>
<feature type="zinc finger region" description="Phorbol-ester/DAG-type" evidence="3">
    <location>
        <begin position="164"/>
        <end position="214"/>
    </location>
</feature>
<feature type="region of interest" description="Disordered" evidence="5">
    <location>
        <begin position="1"/>
        <end position="29"/>
    </location>
</feature>
<feature type="region of interest" description="Disordered" evidence="5">
    <location>
        <begin position="69"/>
        <end position="89"/>
    </location>
</feature>
<feature type="region of interest" description="Disordered" evidence="5">
    <location>
        <begin position="249"/>
        <end position="268"/>
    </location>
</feature>
<feature type="compositionally biased region" description="Low complexity" evidence="5">
    <location>
        <begin position="76"/>
        <end position="87"/>
    </location>
</feature>
<feature type="compositionally biased region" description="Polar residues" evidence="5">
    <location>
        <begin position="251"/>
        <end position="268"/>
    </location>
</feature>
<feature type="splice variant" id="VSP_061059" description="In isoform b." evidence="10">
    <location>
        <begin position="1"/>
        <end position="61"/>
    </location>
</feature>
<gene>
    <name evidence="8 13" type="primary">rsf-1</name>
    <name evidence="9 13" type="synonym">rasf-1</name>
    <name evidence="13" type="ORF">T24F1.3</name>
</gene>
<reference evidence="12" key="1">
    <citation type="journal article" date="1998" name="Science">
        <title>Genome sequence of the nematode C. elegans: a platform for investigating biology.</title>
        <authorList>
            <consortium name="The C. elegans sequencing consortium"/>
        </authorList>
    </citation>
    <scope>NUCLEOTIDE SEQUENCE [LARGE SCALE GENOMIC DNA]</scope>
    <source>
        <strain evidence="12">Bristol N2</strain>
    </source>
</reference>
<reference evidence="10" key="2">
    <citation type="journal article" date="2013" name="Genes Cells">
        <title>C. elegans Rassf homolog, rasf-1, is functionally associated with rab-39 Rab GTPase in oxidative stress response.</title>
        <authorList>
            <person name="Takenaka M."/>
            <person name="Inoue H."/>
            <person name="Takeshima A."/>
            <person name="Kakura T."/>
            <person name="Hori T."/>
        </authorList>
    </citation>
    <scope>FUNCTION</scope>
    <scope>INTERACTION WITH RAB-39</scope>
    <scope>TISSUE SPECIFICITY (ISOFORM A)</scope>
    <scope>DISRUPTION PHENOTYPE</scope>
</reference>
<reference evidence="10" key="3">
    <citation type="journal article" date="2013" name="Exp. Cell Res.">
        <title>Characterization of RSF-1, the Caenorhabditis elegans homolog of the Ras-association domain family protein 1.</title>
        <authorList>
            <person name="Iwasa H."/>
            <person name="Kuroyanagi H."/>
            <person name="Maimaiti S."/>
            <person name="Ikeda M."/>
            <person name="Nakagawa K."/>
            <person name="Hata Y."/>
        </authorList>
    </citation>
    <scope>FUNCTION</scope>
    <scope>INTERACTION WITH CST-1</scope>
    <scope>TISSUE SPECIFICITY</scope>
    <scope>DEVELOPMENTAL STAGE</scope>
</reference>
<name>RASF1_CAEEL</name>
<proteinExistence type="evidence at protein level"/>
<sequence length="615" mass="69144">MLRSVVNNNDKAKESEQSVRVATDDPTYQSYAFQPSTSSSNISWFGGLRTKLSQLSLFPDWMSQLGIKSDDEKMETSSTSSPQSEQSIGEYDESTLVFRPVQLDHFGGAGQEDDGEQVDIWDFGATFLADLDSNHVWNDTIERQHFGPLKDLITTGGGANKINNHSFKTHSLLHPTWCDKCGDFIWGILKEALKCEHCNYTCHARCRDLVTLDCRSPGSSLASSTEFDSIYPQLDGTLGTIPKGLILPPAMSSSTGSDKENGNGNSAGISAENPIFSVKNSFTLPKSFSPVDSLRTKEPSAPPESRYATLRVVERYVKEDTPFEWTDEYKEMDLERKIHSYNSLAKGMEITLHEDGVNFGGHIHVNMNLSRPISVVQGVIPPTVYDVVNTAKSTAKTTSLRTITSFFLPRNTAKVINIDSKTTARKMIVTLLKKFRVADNPRKFALYECEQITDEATCTLNRKLTRISDDACPLKVVLNWQSPHCGRALVLQENDTGDILWDAFEIPELENFLRILGMEEKQYVFQTQQKYQQYRYHLDAELRQRGHSVPDAAAQPMVQTNPFLDEEFLRNQDEYGTSDSMLFSGTIKNAIMGEDPDYVNLEYLKKQNMDQSTNL</sequence>
<protein>
    <recommendedName>
        <fullName evidence="11">Ras association domain-containing protein 1 homolog</fullName>
    </recommendedName>
</protein>